<proteinExistence type="inferred from homology"/>
<accession>Q62KL1</accession>
<feature type="chain" id="PRO_0000121809" description="tRNA pseudouridine synthase B">
    <location>
        <begin position="1"/>
        <end position="311"/>
    </location>
</feature>
<feature type="active site" description="Nucleophile" evidence="1">
    <location>
        <position position="52"/>
    </location>
</feature>
<organism>
    <name type="scientific">Burkholderia mallei (strain ATCC 23344)</name>
    <dbReference type="NCBI Taxonomy" id="243160"/>
    <lineage>
        <taxon>Bacteria</taxon>
        <taxon>Pseudomonadati</taxon>
        <taxon>Pseudomonadota</taxon>
        <taxon>Betaproteobacteria</taxon>
        <taxon>Burkholderiales</taxon>
        <taxon>Burkholderiaceae</taxon>
        <taxon>Burkholderia</taxon>
        <taxon>pseudomallei group</taxon>
    </lineage>
</organism>
<keyword id="KW-0413">Isomerase</keyword>
<keyword id="KW-1185">Reference proteome</keyword>
<keyword id="KW-0819">tRNA processing</keyword>
<evidence type="ECO:0000255" key="1">
    <source>
        <dbReference type="HAMAP-Rule" id="MF_01080"/>
    </source>
</evidence>
<reference key="1">
    <citation type="journal article" date="2004" name="Proc. Natl. Acad. Sci. U.S.A.">
        <title>Structural flexibility in the Burkholderia mallei genome.</title>
        <authorList>
            <person name="Nierman W.C."/>
            <person name="DeShazer D."/>
            <person name="Kim H.S."/>
            <person name="Tettelin H."/>
            <person name="Nelson K.E."/>
            <person name="Feldblyum T.V."/>
            <person name="Ulrich R.L."/>
            <person name="Ronning C.M."/>
            <person name="Brinkac L.M."/>
            <person name="Daugherty S.C."/>
            <person name="Davidsen T.D."/>
            <person name="DeBoy R.T."/>
            <person name="Dimitrov G."/>
            <person name="Dodson R.J."/>
            <person name="Durkin A.S."/>
            <person name="Gwinn M.L."/>
            <person name="Haft D.H."/>
            <person name="Khouri H.M."/>
            <person name="Kolonay J.F."/>
            <person name="Madupu R."/>
            <person name="Mohammoud Y."/>
            <person name="Nelson W.C."/>
            <person name="Radune D."/>
            <person name="Romero C.M."/>
            <person name="Sarria S."/>
            <person name="Selengut J."/>
            <person name="Shamblin C."/>
            <person name="Sullivan S.A."/>
            <person name="White O."/>
            <person name="Yu Y."/>
            <person name="Zafar N."/>
            <person name="Zhou L."/>
            <person name="Fraser C.M."/>
        </authorList>
    </citation>
    <scope>NUCLEOTIDE SEQUENCE [LARGE SCALE GENOMIC DNA]</scope>
    <source>
        <strain>ATCC 23344</strain>
    </source>
</reference>
<protein>
    <recommendedName>
        <fullName evidence="1">tRNA pseudouridine synthase B</fullName>
        <ecNumber evidence="1">5.4.99.25</ecNumber>
    </recommendedName>
    <alternativeName>
        <fullName evidence="1">tRNA pseudouridine(55) synthase</fullName>
        <shortName evidence="1">Psi55 synthase</shortName>
    </alternativeName>
    <alternativeName>
        <fullName evidence="1">tRNA pseudouridylate synthase</fullName>
    </alternativeName>
    <alternativeName>
        <fullName evidence="1">tRNA-uridine isomerase</fullName>
    </alternativeName>
</protein>
<comment type="function">
    <text evidence="1">Responsible for synthesis of pseudouridine from uracil-55 in the psi GC loop of transfer RNAs.</text>
</comment>
<comment type="catalytic activity">
    <reaction evidence="1">
        <text>uridine(55) in tRNA = pseudouridine(55) in tRNA</text>
        <dbReference type="Rhea" id="RHEA:42532"/>
        <dbReference type="Rhea" id="RHEA-COMP:10101"/>
        <dbReference type="Rhea" id="RHEA-COMP:10102"/>
        <dbReference type="ChEBI" id="CHEBI:65314"/>
        <dbReference type="ChEBI" id="CHEBI:65315"/>
        <dbReference type="EC" id="5.4.99.25"/>
    </reaction>
</comment>
<comment type="similarity">
    <text evidence="1">Belongs to the pseudouridine synthase TruB family. Type 1 subfamily.</text>
</comment>
<dbReference type="EC" id="5.4.99.25" evidence="1"/>
<dbReference type="EMBL" id="CP000010">
    <property type="protein sequence ID" value="AAU48843.1"/>
    <property type="molecule type" value="Genomic_DNA"/>
</dbReference>
<dbReference type="RefSeq" id="YP_102758.1">
    <property type="nucleotide sequence ID" value="NC_006348.1"/>
</dbReference>
<dbReference type="SMR" id="Q62KL1"/>
<dbReference type="KEGG" id="bma:BMA1059"/>
<dbReference type="PATRIC" id="fig|243160.12.peg.1095"/>
<dbReference type="eggNOG" id="COG0130">
    <property type="taxonomic scope" value="Bacteria"/>
</dbReference>
<dbReference type="HOGENOM" id="CLU_032087_0_3_4"/>
<dbReference type="Proteomes" id="UP000006693">
    <property type="component" value="Chromosome 1"/>
</dbReference>
<dbReference type="GO" id="GO:0003723">
    <property type="term" value="F:RNA binding"/>
    <property type="evidence" value="ECO:0007669"/>
    <property type="project" value="InterPro"/>
</dbReference>
<dbReference type="GO" id="GO:0160148">
    <property type="term" value="F:tRNA pseudouridine(55) synthase activity"/>
    <property type="evidence" value="ECO:0007669"/>
    <property type="project" value="UniProtKB-EC"/>
</dbReference>
<dbReference type="GO" id="GO:1990481">
    <property type="term" value="P:mRNA pseudouridine synthesis"/>
    <property type="evidence" value="ECO:0007669"/>
    <property type="project" value="TreeGrafter"/>
</dbReference>
<dbReference type="GO" id="GO:0031119">
    <property type="term" value="P:tRNA pseudouridine synthesis"/>
    <property type="evidence" value="ECO:0007669"/>
    <property type="project" value="UniProtKB-UniRule"/>
</dbReference>
<dbReference type="CDD" id="cd02573">
    <property type="entry name" value="PseudoU_synth_EcTruB"/>
    <property type="match status" value="1"/>
</dbReference>
<dbReference type="CDD" id="cd21152">
    <property type="entry name" value="PUA_TruB_bacterial"/>
    <property type="match status" value="1"/>
</dbReference>
<dbReference type="FunFam" id="3.30.2350.10:FF:000011">
    <property type="entry name" value="tRNA pseudouridine synthase B"/>
    <property type="match status" value="1"/>
</dbReference>
<dbReference type="Gene3D" id="3.30.2350.10">
    <property type="entry name" value="Pseudouridine synthase"/>
    <property type="match status" value="1"/>
</dbReference>
<dbReference type="Gene3D" id="2.30.130.10">
    <property type="entry name" value="PUA domain"/>
    <property type="match status" value="1"/>
</dbReference>
<dbReference type="HAMAP" id="MF_01080">
    <property type="entry name" value="TruB_bact"/>
    <property type="match status" value="1"/>
</dbReference>
<dbReference type="InterPro" id="IPR020103">
    <property type="entry name" value="PsdUridine_synth_cat_dom_sf"/>
</dbReference>
<dbReference type="InterPro" id="IPR002501">
    <property type="entry name" value="PsdUridine_synth_N"/>
</dbReference>
<dbReference type="InterPro" id="IPR015947">
    <property type="entry name" value="PUA-like_sf"/>
</dbReference>
<dbReference type="InterPro" id="IPR036974">
    <property type="entry name" value="PUA_sf"/>
</dbReference>
<dbReference type="InterPro" id="IPR014780">
    <property type="entry name" value="tRNA_psdUridine_synth_TruB"/>
</dbReference>
<dbReference type="InterPro" id="IPR015240">
    <property type="entry name" value="tRNA_sdUridine_synth_fam1_C"/>
</dbReference>
<dbReference type="InterPro" id="IPR032819">
    <property type="entry name" value="TruB_C"/>
</dbReference>
<dbReference type="NCBIfam" id="TIGR00431">
    <property type="entry name" value="TruB"/>
    <property type="match status" value="1"/>
</dbReference>
<dbReference type="PANTHER" id="PTHR13767:SF2">
    <property type="entry name" value="PSEUDOURIDYLATE SYNTHASE TRUB1"/>
    <property type="match status" value="1"/>
</dbReference>
<dbReference type="PANTHER" id="PTHR13767">
    <property type="entry name" value="TRNA-PSEUDOURIDINE SYNTHASE"/>
    <property type="match status" value="1"/>
</dbReference>
<dbReference type="Pfam" id="PF09157">
    <property type="entry name" value="TruB-C_2"/>
    <property type="match status" value="1"/>
</dbReference>
<dbReference type="Pfam" id="PF16198">
    <property type="entry name" value="TruB_C_2"/>
    <property type="match status" value="1"/>
</dbReference>
<dbReference type="Pfam" id="PF01509">
    <property type="entry name" value="TruB_N"/>
    <property type="match status" value="1"/>
</dbReference>
<dbReference type="SUPFAM" id="SSF55120">
    <property type="entry name" value="Pseudouridine synthase"/>
    <property type="match status" value="1"/>
</dbReference>
<dbReference type="SUPFAM" id="SSF88697">
    <property type="entry name" value="PUA domain-like"/>
    <property type="match status" value="1"/>
</dbReference>
<name>TRUB_BURMA</name>
<gene>
    <name evidence="1" type="primary">truB</name>
    <name type="ordered locus">BMA1059</name>
</gene>
<sequence length="311" mass="33303">MTTVSPRPRMARRALDGVLLLDKPVGLSSNDALMRAKRLYQAKKAGHTGTLDPLASGLLPLCFGEATKFSQDLLEADKTYEATMRLGVRTTTGDAEGDVLDTRDVSCDEAAVRAALARFVGEIVQVPPMYSALKRDGKPLYEYARAGQTVEREGRTVTIRALALVSCALPDVTFRVTCSKGTYVRTLAEDIGEALGCGAHLTMLRRTGVGPLTLEHAVTLDALDAATQDERDARLAPVDALLSTFPCVKLDAALATRFLHGQRLKLSELAARPDAAEGGRVRVYDADDRLLGVARASEGVLAPERLVVTGA</sequence>